<accession>Q63ZJ3</accession>
<gene>
    <name type="primary">scgn</name>
</gene>
<comment type="subcellular location">
    <subcellularLocation>
        <location evidence="1">Cytoplasm</location>
    </subcellularLocation>
</comment>
<organism>
    <name type="scientific">Xenopus laevis</name>
    <name type="common">African clawed frog</name>
    <dbReference type="NCBI Taxonomy" id="8355"/>
    <lineage>
        <taxon>Eukaryota</taxon>
        <taxon>Metazoa</taxon>
        <taxon>Chordata</taxon>
        <taxon>Craniata</taxon>
        <taxon>Vertebrata</taxon>
        <taxon>Euteleostomi</taxon>
        <taxon>Amphibia</taxon>
        <taxon>Batrachia</taxon>
        <taxon>Anura</taxon>
        <taxon>Pipoidea</taxon>
        <taxon>Pipidae</taxon>
        <taxon>Xenopodinae</taxon>
        <taxon>Xenopus</taxon>
        <taxon>Xenopus</taxon>
    </lineage>
</organism>
<name>SEGN_XENLA</name>
<dbReference type="EMBL" id="BC082920">
    <property type="protein sequence ID" value="AAH82920.1"/>
    <property type="molecule type" value="mRNA"/>
</dbReference>
<dbReference type="RefSeq" id="NP_001088097.1">
    <property type="nucleotide sequence ID" value="NM_001094628.1"/>
</dbReference>
<dbReference type="SMR" id="Q63ZJ3"/>
<dbReference type="DNASU" id="494795"/>
<dbReference type="GeneID" id="494795"/>
<dbReference type="KEGG" id="xla:494795"/>
<dbReference type="AGR" id="Xenbase:XB-GENE-988349"/>
<dbReference type="CTD" id="494795"/>
<dbReference type="Xenbase" id="XB-GENE-988349">
    <property type="gene designation" value="scgn.L"/>
</dbReference>
<dbReference type="OrthoDB" id="428774at2759"/>
<dbReference type="Proteomes" id="UP000186698">
    <property type="component" value="Chromosome 6L"/>
</dbReference>
<dbReference type="Bgee" id="494795">
    <property type="expression patterns" value="Expressed in brain and 14 other cell types or tissues"/>
</dbReference>
<dbReference type="GO" id="GO:0005829">
    <property type="term" value="C:cytosol"/>
    <property type="evidence" value="ECO:0000318"/>
    <property type="project" value="GO_Central"/>
</dbReference>
<dbReference type="GO" id="GO:0030425">
    <property type="term" value="C:dendrite"/>
    <property type="evidence" value="ECO:0000318"/>
    <property type="project" value="GO_Central"/>
</dbReference>
<dbReference type="GO" id="GO:0005634">
    <property type="term" value="C:nucleus"/>
    <property type="evidence" value="ECO:0000318"/>
    <property type="project" value="GO_Central"/>
</dbReference>
<dbReference type="GO" id="GO:0045202">
    <property type="term" value="C:synapse"/>
    <property type="evidence" value="ECO:0000318"/>
    <property type="project" value="GO_Central"/>
</dbReference>
<dbReference type="GO" id="GO:0043195">
    <property type="term" value="C:terminal bouton"/>
    <property type="evidence" value="ECO:0000318"/>
    <property type="project" value="GO_Central"/>
</dbReference>
<dbReference type="GO" id="GO:0005509">
    <property type="term" value="F:calcium ion binding"/>
    <property type="evidence" value="ECO:0000318"/>
    <property type="project" value="GO_Central"/>
</dbReference>
<dbReference type="GO" id="GO:1900271">
    <property type="term" value="P:regulation of long-term synaptic potentiation"/>
    <property type="evidence" value="ECO:0007669"/>
    <property type="project" value="TreeGrafter"/>
</dbReference>
<dbReference type="GO" id="GO:0099509">
    <property type="term" value="P:regulation of presynaptic cytosolic calcium ion concentration"/>
    <property type="evidence" value="ECO:0007669"/>
    <property type="project" value="TreeGrafter"/>
</dbReference>
<dbReference type="CDD" id="cd16178">
    <property type="entry name" value="EFh_HEF_SCGN"/>
    <property type="match status" value="1"/>
</dbReference>
<dbReference type="FunFam" id="1.10.238.10:FF:000142">
    <property type="entry name" value="Secretagogin"/>
    <property type="match status" value="1"/>
</dbReference>
<dbReference type="FunFam" id="1.10.238.10:FF:000186">
    <property type="entry name" value="Secretagogin"/>
    <property type="match status" value="1"/>
</dbReference>
<dbReference type="Gene3D" id="1.10.238.10">
    <property type="entry name" value="EF-hand"/>
    <property type="match status" value="3"/>
</dbReference>
<dbReference type="InterPro" id="IPR051001">
    <property type="entry name" value="Calbindin_Ca-bind"/>
</dbReference>
<dbReference type="InterPro" id="IPR011992">
    <property type="entry name" value="EF-hand-dom_pair"/>
</dbReference>
<dbReference type="InterPro" id="IPR018247">
    <property type="entry name" value="EF_Hand_1_Ca_BS"/>
</dbReference>
<dbReference type="InterPro" id="IPR002048">
    <property type="entry name" value="EF_hand_dom"/>
</dbReference>
<dbReference type="InterPro" id="IPR035798">
    <property type="entry name" value="EFh_SCGN"/>
</dbReference>
<dbReference type="PANTHER" id="PTHR19972">
    <property type="entry name" value="CALBINDIN"/>
    <property type="match status" value="1"/>
</dbReference>
<dbReference type="PANTHER" id="PTHR19972:SF15">
    <property type="entry name" value="SECRETAGOGIN"/>
    <property type="match status" value="1"/>
</dbReference>
<dbReference type="Pfam" id="PF13202">
    <property type="entry name" value="EF-hand_5"/>
    <property type="match status" value="1"/>
</dbReference>
<dbReference type="Pfam" id="PF13499">
    <property type="entry name" value="EF-hand_7"/>
    <property type="match status" value="1"/>
</dbReference>
<dbReference type="SMART" id="SM00054">
    <property type="entry name" value="EFh"/>
    <property type="match status" value="5"/>
</dbReference>
<dbReference type="SUPFAM" id="SSF47473">
    <property type="entry name" value="EF-hand"/>
    <property type="match status" value="2"/>
</dbReference>
<dbReference type="PROSITE" id="PS00018">
    <property type="entry name" value="EF_HAND_1"/>
    <property type="match status" value="4"/>
</dbReference>
<dbReference type="PROSITE" id="PS50222">
    <property type="entry name" value="EF_HAND_2"/>
    <property type="match status" value="6"/>
</dbReference>
<feature type="chain" id="PRO_0000330628" description="Secretagogin">
    <location>
        <begin position="1"/>
        <end position="271"/>
    </location>
</feature>
<feature type="domain" description="EF-hand 1" evidence="2">
    <location>
        <begin position="8"/>
        <end position="43"/>
    </location>
</feature>
<feature type="domain" description="EF-hand 2" evidence="2">
    <location>
        <begin position="53"/>
        <end position="88"/>
    </location>
</feature>
<feature type="domain" description="EF-hand 3" evidence="2">
    <location>
        <begin position="100"/>
        <end position="135"/>
    </location>
</feature>
<feature type="domain" description="EF-hand 4" evidence="2">
    <location>
        <begin position="144"/>
        <end position="179"/>
    </location>
</feature>
<feature type="domain" description="EF-hand 5" evidence="2">
    <location>
        <begin position="192"/>
        <end position="227"/>
    </location>
</feature>
<feature type="domain" description="EF-hand 6" evidence="2">
    <location>
        <begin position="235"/>
        <end position="271"/>
    </location>
</feature>
<feature type="binding site" evidence="2">
    <location>
        <position position="21"/>
    </location>
    <ligand>
        <name>Ca(2+)</name>
        <dbReference type="ChEBI" id="CHEBI:29108"/>
        <label>1</label>
    </ligand>
</feature>
<feature type="binding site" evidence="2">
    <location>
        <position position="23"/>
    </location>
    <ligand>
        <name>Ca(2+)</name>
        <dbReference type="ChEBI" id="CHEBI:29108"/>
        <label>1</label>
    </ligand>
</feature>
<feature type="binding site" evidence="2">
    <location>
        <position position="25"/>
    </location>
    <ligand>
        <name>Ca(2+)</name>
        <dbReference type="ChEBI" id="CHEBI:29108"/>
        <label>1</label>
    </ligand>
</feature>
<feature type="binding site" evidence="2">
    <location>
        <position position="27"/>
    </location>
    <ligand>
        <name>Ca(2+)</name>
        <dbReference type="ChEBI" id="CHEBI:29108"/>
        <label>1</label>
    </ligand>
</feature>
<feature type="binding site" evidence="2">
    <location>
        <position position="32"/>
    </location>
    <ligand>
        <name>Ca(2+)</name>
        <dbReference type="ChEBI" id="CHEBI:29108"/>
        <label>1</label>
    </ligand>
</feature>
<feature type="binding site" evidence="2">
    <location>
        <position position="113"/>
    </location>
    <ligand>
        <name>Ca(2+)</name>
        <dbReference type="ChEBI" id="CHEBI:29108"/>
        <label>2</label>
    </ligand>
</feature>
<feature type="binding site" evidence="2">
    <location>
        <position position="115"/>
    </location>
    <ligand>
        <name>Ca(2+)</name>
        <dbReference type="ChEBI" id="CHEBI:29108"/>
        <label>2</label>
    </ligand>
</feature>
<feature type="binding site" evidence="2">
    <location>
        <position position="117"/>
    </location>
    <ligand>
        <name>Ca(2+)</name>
        <dbReference type="ChEBI" id="CHEBI:29108"/>
        <label>2</label>
    </ligand>
</feature>
<feature type="binding site" evidence="2">
    <location>
        <position position="124"/>
    </location>
    <ligand>
        <name>Ca(2+)</name>
        <dbReference type="ChEBI" id="CHEBI:29108"/>
        <label>2</label>
    </ligand>
</feature>
<feature type="binding site" evidence="3">
    <location>
        <position position="159"/>
    </location>
    <ligand>
        <name>Ca(2+)</name>
        <dbReference type="ChEBI" id="CHEBI:29108"/>
        <label>3</label>
    </ligand>
</feature>
<feature type="binding site" evidence="3">
    <location>
        <position position="161"/>
    </location>
    <ligand>
        <name>Ca(2+)</name>
        <dbReference type="ChEBI" id="CHEBI:29108"/>
        <label>3</label>
    </ligand>
</feature>
<feature type="binding site" evidence="3">
    <location>
        <position position="163"/>
    </location>
    <ligand>
        <name>Ca(2+)</name>
        <dbReference type="ChEBI" id="CHEBI:29108"/>
        <label>3</label>
    </ligand>
</feature>
<feature type="binding site" evidence="3">
    <location>
        <position position="168"/>
    </location>
    <ligand>
        <name>Ca(2+)</name>
        <dbReference type="ChEBI" id="CHEBI:29108"/>
        <label>3</label>
    </ligand>
</feature>
<feature type="binding site" evidence="2">
    <location>
        <position position="205"/>
    </location>
    <ligand>
        <name>Ca(2+)</name>
        <dbReference type="ChEBI" id="CHEBI:29108"/>
        <label>4</label>
    </ligand>
</feature>
<feature type="binding site" evidence="2">
    <location>
        <position position="207"/>
    </location>
    <ligand>
        <name>Ca(2+)</name>
        <dbReference type="ChEBI" id="CHEBI:29108"/>
        <label>4</label>
    </ligand>
</feature>
<feature type="binding site" evidence="2">
    <location>
        <position position="209"/>
    </location>
    <ligand>
        <name>Ca(2+)</name>
        <dbReference type="ChEBI" id="CHEBI:29108"/>
        <label>4</label>
    </ligand>
</feature>
<feature type="binding site" evidence="2">
    <location>
        <position position="216"/>
    </location>
    <ligand>
        <name>Ca(2+)</name>
        <dbReference type="ChEBI" id="CHEBI:29108"/>
        <label>4</label>
    </ligand>
</feature>
<feature type="binding site" evidence="2">
    <location>
        <position position="249"/>
    </location>
    <ligand>
        <name>Ca(2+)</name>
        <dbReference type="ChEBI" id="CHEBI:29108"/>
        <label>5</label>
    </ligand>
</feature>
<feature type="binding site" evidence="2">
    <location>
        <position position="251"/>
    </location>
    <ligand>
        <name>Ca(2+)</name>
        <dbReference type="ChEBI" id="CHEBI:29108"/>
        <label>5</label>
    </ligand>
</feature>
<feature type="binding site" evidence="2">
    <location>
        <position position="253"/>
    </location>
    <ligand>
        <name>Ca(2+)</name>
        <dbReference type="ChEBI" id="CHEBI:29108"/>
        <label>5</label>
    </ligand>
</feature>
<feature type="binding site" evidence="2">
    <location>
        <position position="255"/>
    </location>
    <ligand>
        <name>Ca(2+)</name>
        <dbReference type="ChEBI" id="CHEBI:29108"/>
        <label>5</label>
    </ligand>
</feature>
<feature type="binding site">
    <location>
        <position position="260"/>
    </location>
    <ligand>
        <name>Ca(2+)</name>
        <dbReference type="ChEBI" id="CHEBI:29108"/>
        <label>5</label>
    </ligand>
</feature>
<evidence type="ECO:0000250" key="1"/>
<evidence type="ECO:0000255" key="2">
    <source>
        <dbReference type="PROSITE-ProRule" id="PRU00448"/>
    </source>
</evidence>
<evidence type="ECO:0000305" key="3"/>
<sequence length="271" mass="31226">MDSAFLKLDAAEFLEIWQRFDADDNGYIEGKELDEFFCHLLKKLGTNAITADKVQGVKDRFMSAYDITADGRLQIQELANMILPEDENFLLLFRRETPLDNSVEFMRIWRKFDEDSSGFISAVELRNFLQDLFLQHKKHITGDKLDEYTDTMMKLFNRNKDGRLDLNDLAKILALQENFLLQFKMDASSQEERKSDFETIFAHYDVSKTGALEGPEVDGFVKDMMELVKPSISGVDLDKFRQILLNHCDVNKDGKIQKSELALCLGLKANP</sequence>
<proteinExistence type="evidence at transcript level"/>
<reference key="1">
    <citation type="submission" date="2004-09" db="EMBL/GenBank/DDBJ databases">
        <authorList>
            <consortium name="NIH - Xenopus Gene Collection (XGC) project"/>
        </authorList>
    </citation>
    <scope>NUCLEOTIDE SEQUENCE [LARGE SCALE MRNA]</scope>
    <source>
        <tissue>Tadpole</tissue>
    </source>
</reference>
<keyword id="KW-0106">Calcium</keyword>
<keyword id="KW-0963">Cytoplasm</keyword>
<keyword id="KW-0479">Metal-binding</keyword>
<keyword id="KW-1185">Reference proteome</keyword>
<keyword id="KW-0677">Repeat</keyword>
<protein>
    <recommendedName>
        <fullName>Secretagogin</fullName>
    </recommendedName>
</protein>